<reference key="1">
    <citation type="journal article" date="1999" name="Immunol. Lett.">
        <title>Identification of the rat homologue of the human NKp46 triggering receptor.</title>
        <authorList>
            <person name="Falco M."/>
            <person name="Cantoni C."/>
            <person name="Bottino C."/>
            <person name="Moretta A."/>
            <person name="Biassoni R."/>
        </authorList>
    </citation>
    <scope>NUCLEOTIDE SEQUENCE [MRNA]</scope>
    <scope>TISSUE SPECIFICITY</scope>
    <source>
        <tissue>Lymphoid tissue</tissue>
    </source>
</reference>
<reference key="2">
    <citation type="submission" date="1998-10" db="EMBL/GenBank/DDBJ databases">
        <title>Molecular characterization of KILR-1, a novel immunoglobulin-like gene in the rat, expressed by NK cells.</title>
        <authorList>
            <person name="Berg S.F."/>
            <person name="Dissen E."/>
            <person name="Westgaard I.H."/>
            <person name="Fossum S."/>
        </authorList>
    </citation>
    <scope>NUCLEOTIDE SEQUENCE [MRNA]</scope>
    <source>
        <strain>PVG</strain>
    </source>
</reference>
<feature type="signal peptide" evidence="3">
    <location>
        <begin position="1"/>
        <end position="16"/>
    </location>
</feature>
<feature type="chain" id="PRO_0000015030" description="Natural cytotoxicity triggering receptor 1">
    <location>
        <begin position="17"/>
        <end position="325"/>
    </location>
</feature>
<feature type="topological domain" description="Extracellular" evidence="3">
    <location>
        <begin position="17"/>
        <end position="258"/>
    </location>
</feature>
<feature type="transmembrane region" description="Helical" evidence="3">
    <location>
        <begin position="259"/>
        <end position="279"/>
    </location>
</feature>
<feature type="topological domain" description="Cytoplasmic" evidence="3">
    <location>
        <begin position="280"/>
        <end position="325"/>
    </location>
</feature>
<feature type="domain" description="Ig-like 1">
    <location>
        <begin position="42"/>
        <end position="100"/>
    </location>
</feature>
<feature type="domain" description="Ig-like 2">
    <location>
        <begin position="137"/>
        <end position="192"/>
    </location>
</feature>
<feature type="glycosylation site" description="N-linked (GlcNAc...) asparagine" evidence="3">
    <location>
        <position position="139"/>
    </location>
</feature>
<feature type="glycosylation site" description="N-linked (GlcNAc...) asparagine" evidence="3">
    <location>
        <position position="216"/>
    </location>
</feature>
<feature type="disulfide bond" evidence="2">
    <location>
        <begin position="49"/>
        <end position="98"/>
    </location>
</feature>
<feature type="disulfide bond" evidence="2">
    <location>
        <begin position="144"/>
        <end position="190"/>
    </location>
</feature>
<gene>
    <name type="primary">Ncr1</name>
    <name type="synonym">Ar1</name>
    <name type="synonym">Kilr1</name>
    <name type="synonym">Ly94</name>
</gene>
<dbReference type="EMBL" id="AJ012741">
    <property type="protein sequence ID" value="CAA10161.1"/>
    <property type="molecule type" value="mRNA"/>
</dbReference>
<dbReference type="EMBL" id="AF082533">
    <property type="protein sequence ID" value="AAC69890.1"/>
    <property type="molecule type" value="mRNA"/>
</dbReference>
<dbReference type="RefSeq" id="NP_476547.1">
    <property type="nucleotide sequence ID" value="NM_057199.2"/>
</dbReference>
<dbReference type="SMR" id="Q9Z0H5"/>
<dbReference type="FunCoup" id="Q9Z0H5">
    <property type="interactions" value="84"/>
</dbReference>
<dbReference type="STRING" id="10116.ENSRNOP00000025080"/>
<dbReference type="GlyCosmos" id="Q9Z0H5">
    <property type="glycosylation" value="2 sites, No reported glycans"/>
</dbReference>
<dbReference type="GlyGen" id="Q9Z0H5">
    <property type="glycosylation" value="2 sites"/>
</dbReference>
<dbReference type="PhosphoSitePlus" id="Q9Z0H5"/>
<dbReference type="PaxDb" id="10116-ENSRNOP00000025080"/>
<dbReference type="GeneID" id="117547"/>
<dbReference type="KEGG" id="rno:117547"/>
<dbReference type="UCSC" id="RGD:621288">
    <property type="organism name" value="rat"/>
</dbReference>
<dbReference type="AGR" id="RGD:621288"/>
<dbReference type="CTD" id="9437"/>
<dbReference type="RGD" id="621288">
    <property type="gene designation" value="Ncr1"/>
</dbReference>
<dbReference type="VEuPathDB" id="HostDB:ENSRNOG00000027855"/>
<dbReference type="eggNOG" id="ENOG502RWVC">
    <property type="taxonomic scope" value="Eukaryota"/>
</dbReference>
<dbReference type="HOGENOM" id="CLU_021100_1_1_1"/>
<dbReference type="InParanoid" id="Q9Z0H5"/>
<dbReference type="OrthoDB" id="83461at9989"/>
<dbReference type="PhylomeDB" id="Q9Z0H5"/>
<dbReference type="TreeFam" id="TF336644"/>
<dbReference type="PRO" id="PR:Q9Z0H5"/>
<dbReference type="Proteomes" id="UP000002494">
    <property type="component" value="Chromosome 1"/>
</dbReference>
<dbReference type="Bgee" id="ENSRNOG00000018458">
    <property type="expression patterns" value="Expressed in spleen and 6 other cell types or tissues"/>
</dbReference>
<dbReference type="GO" id="GO:0009986">
    <property type="term" value="C:cell surface"/>
    <property type="evidence" value="ECO:0000266"/>
    <property type="project" value="RGD"/>
</dbReference>
<dbReference type="GO" id="GO:0005886">
    <property type="term" value="C:plasma membrane"/>
    <property type="evidence" value="ECO:0000318"/>
    <property type="project" value="GO_Central"/>
</dbReference>
<dbReference type="GO" id="GO:0051607">
    <property type="term" value="P:defense response to virus"/>
    <property type="evidence" value="ECO:0000266"/>
    <property type="project" value="RGD"/>
</dbReference>
<dbReference type="GO" id="GO:0009597">
    <property type="term" value="P:detection of virus"/>
    <property type="evidence" value="ECO:0000266"/>
    <property type="project" value="RGD"/>
</dbReference>
<dbReference type="GO" id="GO:0002764">
    <property type="term" value="P:immune response-regulating signaling pathway"/>
    <property type="evidence" value="ECO:0000318"/>
    <property type="project" value="GO_Central"/>
</dbReference>
<dbReference type="FunFam" id="2.60.40.10:FF:000049">
    <property type="entry name" value="Leukocyte immunoglobulin-like receptor subfamily B member 1"/>
    <property type="match status" value="2"/>
</dbReference>
<dbReference type="Gene3D" id="2.60.40.10">
    <property type="entry name" value="Immunoglobulins"/>
    <property type="match status" value="2"/>
</dbReference>
<dbReference type="InterPro" id="IPR036179">
    <property type="entry name" value="Ig-like_dom_sf"/>
</dbReference>
<dbReference type="InterPro" id="IPR013783">
    <property type="entry name" value="Ig-like_fold"/>
</dbReference>
<dbReference type="InterPro" id="IPR050412">
    <property type="entry name" value="Ig-like_Receptors_ImmuneReg"/>
</dbReference>
<dbReference type="InterPro" id="IPR003599">
    <property type="entry name" value="Ig_sub"/>
</dbReference>
<dbReference type="InterPro" id="IPR013151">
    <property type="entry name" value="Immunoglobulin_dom"/>
</dbReference>
<dbReference type="PANTHER" id="PTHR11738">
    <property type="entry name" value="MHC CLASS I NK CELL RECEPTOR"/>
    <property type="match status" value="1"/>
</dbReference>
<dbReference type="PANTHER" id="PTHR11738:SF14">
    <property type="entry name" value="NATURAL CYTOTOXICITY TRIGGERING RECEPTOR 1"/>
    <property type="match status" value="1"/>
</dbReference>
<dbReference type="Pfam" id="PF00047">
    <property type="entry name" value="ig"/>
    <property type="match status" value="1"/>
</dbReference>
<dbReference type="Pfam" id="PF13895">
    <property type="entry name" value="Ig_2"/>
    <property type="match status" value="1"/>
</dbReference>
<dbReference type="SMART" id="SM00409">
    <property type="entry name" value="IG"/>
    <property type="match status" value="2"/>
</dbReference>
<dbReference type="SUPFAM" id="SSF48726">
    <property type="entry name" value="Immunoglobulin"/>
    <property type="match status" value="2"/>
</dbReference>
<accession>Q9Z0H5</accession>
<proteinExistence type="evidence at transcript level"/>
<evidence type="ECO:0000250" key="1"/>
<evidence type="ECO:0000250" key="2">
    <source>
        <dbReference type="UniProtKB" id="O76036"/>
    </source>
</evidence>
<evidence type="ECO:0000255" key="3"/>
<evidence type="ECO:0000269" key="4">
    <source>
    </source>
</evidence>
<evidence type="ECO:0000305" key="5"/>
<name>NCTR1_RAT</name>
<protein>
    <recommendedName>
        <fullName>Natural cytotoxicity triggering receptor 1</fullName>
    </recommendedName>
    <alternativeName>
        <fullName>Activating receptor 1</fullName>
        <shortName>rAR-1</shortName>
    </alternativeName>
    <alternativeName>
        <fullName>Lymphocyte antigen 94 homolog</fullName>
    </alternativeName>
    <alternativeName>
        <fullName>NK receptor KILR-1</fullName>
    </alternativeName>
    <alternativeName>
        <fullName>NKACTR</fullName>
    </alternativeName>
    <alternativeName>
        <fullName>Natural killer cell p46-related protein</fullName>
        <shortName>NK-p46</shortName>
        <shortName>NKp46</shortName>
    </alternativeName>
    <cdAntigenName>CD335</cdAntigenName>
</protein>
<organism>
    <name type="scientific">Rattus norvegicus</name>
    <name type="common">Rat</name>
    <dbReference type="NCBI Taxonomy" id="10116"/>
    <lineage>
        <taxon>Eukaryota</taxon>
        <taxon>Metazoa</taxon>
        <taxon>Chordata</taxon>
        <taxon>Craniata</taxon>
        <taxon>Vertebrata</taxon>
        <taxon>Euteleostomi</taxon>
        <taxon>Mammalia</taxon>
        <taxon>Eutheria</taxon>
        <taxon>Euarchontoglires</taxon>
        <taxon>Glires</taxon>
        <taxon>Rodentia</taxon>
        <taxon>Myomorpha</taxon>
        <taxon>Muroidea</taxon>
        <taxon>Muridae</taxon>
        <taxon>Murinae</taxon>
        <taxon>Rattus</taxon>
    </lineage>
</organism>
<comment type="function">
    <text evidence="1">Cytotoxicity-activating receptor that may contribute to the increased efficiency of activated natural killer (NK) cells to mediate tumor cell lysis.</text>
</comment>
<comment type="subunit">
    <text evidence="1">Interacts with CD3Z and FCER1G.</text>
</comment>
<comment type="subcellular location">
    <subcellularLocation>
        <location evidence="5">Cell membrane</location>
        <topology evidence="5">Single-pass type I membrane protein</topology>
    </subcellularLocation>
</comment>
<comment type="tissue specificity">
    <text evidence="4">Weakly expressed in spleen, heart and lung.</text>
</comment>
<comment type="similarity">
    <text evidence="5">Belongs to the natural cytotoxicity receptor (NCR) family.</text>
</comment>
<sequence>MLPTLTALLCLGLCLSQRINTEKQTLPKPIIWAKPSIMVTKGNSVNIWCQGAQSASEYQLYFEGSFFALERPKSSRSMNKVKFFISQMTSHTAGIYTCFYQSGELWSESSNPLKLVVTGLYDTPTLWVHPGPEVTLGENVTFSCHLKTATSKFFLLKERESNHIQHKYGNIQAEFPMGPVTRAHRGTYRCFGSYNDYAWSFPSEPVTLLITGEVENTSLAPTDPVSSLDYWEFDLSTKESGLQKDSAFWDHTAQNLIRIGLACIIVMALVWLLAEDWLSRRKDHEKLNRLTSWECRGRRRMHRYHEEEQRDAISMRELKATPGDM</sequence>
<keyword id="KW-1003">Cell membrane</keyword>
<keyword id="KW-1015">Disulfide bond</keyword>
<keyword id="KW-0325">Glycoprotein</keyword>
<keyword id="KW-0393">Immunoglobulin domain</keyword>
<keyword id="KW-0472">Membrane</keyword>
<keyword id="KW-0675">Receptor</keyword>
<keyword id="KW-1185">Reference proteome</keyword>
<keyword id="KW-0677">Repeat</keyword>
<keyword id="KW-0732">Signal</keyword>
<keyword id="KW-0812">Transmembrane</keyword>
<keyword id="KW-1133">Transmembrane helix</keyword>